<comment type="function">
    <text evidence="1">This is one of the proteins that bind and probably mediate the attachment of the 5S RNA into the large ribosomal subunit, where it forms part of the central protuberance.</text>
</comment>
<comment type="subunit">
    <text evidence="1">Part of the 50S ribosomal subunit; part of the 5S rRNA/L5/L18/L25 subcomplex. Contacts the 5S and 23S rRNAs.</text>
</comment>
<comment type="similarity">
    <text evidence="1">Belongs to the universal ribosomal protein uL18 family.</text>
</comment>
<proteinExistence type="inferred from homology"/>
<reference key="1">
    <citation type="journal article" date="2007" name="Proc. Natl. Acad. Sci. U.S.A.">
        <title>Deep-sea vent epsilon-proteobacterial genomes provide insights into emergence of pathogens.</title>
        <authorList>
            <person name="Nakagawa S."/>
            <person name="Takaki Y."/>
            <person name="Shimamura S."/>
            <person name="Reysenbach A.-L."/>
            <person name="Takai K."/>
            <person name="Horikoshi K."/>
        </authorList>
    </citation>
    <scope>NUCLEOTIDE SEQUENCE [LARGE SCALE GENOMIC DNA]</scope>
    <source>
        <strain>NBC37-1</strain>
    </source>
</reference>
<accession>A6QCR4</accession>
<sequence>MLKSIQKRKNKLRAQRKARVKGKIFGTAELPRLTVYKSNKHFYAQAIDDNAGATLASADGRKLGLGANREDVKKVAAEMAKNLASANIETVVFDRNGYLYHGVVASFADALREAGIKF</sequence>
<dbReference type="EMBL" id="AP009179">
    <property type="protein sequence ID" value="BAF73273.1"/>
    <property type="molecule type" value="Genomic_DNA"/>
</dbReference>
<dbReference type="RefSeq" id="WP_012084114.1">
    <property type="nucleotide sequence ID" value="NC_009663.1"/>
</dbReference>
<dbReference type="SMR" id="A6QCR4"/>
<dbReference type="STRING" id="387093.SUN_2337"/>
<dbReference type="KEGG" id="sun:SUN_2337"/>
<dbReference type="eggNOG" id="COG0256">
    <property type="taxonomic scope" value="Bacteria"/>
</dbReference>
<dbReference type="HOGENOM" id="CLU_098841_0_1_7"/>
<dbReference type="OrthoDB" id="9810939at2"/>
<dbReference type="Proteomes" id="UP000006378">
    <property type="component" value="Chromosome"/>
</dbReference>
<dbReference type="GO" id="GO:0022625">
    <property type="term" value="C:cytosolic large ribosomal subunit"/>
    <property type="evidence" value="ECO:0007669"/>
    <property type="project" value="TreeGrafter"/>
</dbReference>
<dbReference type="GO" id="GO:0008097">
    <property type="term" value="F:5S rRNA binding"/>
    <property type="evidence" value="ECO:0007669"/>
    <property type="project" value="TreeGrafter"/>
</dbReference>
<dbReference type="GO" id="GO:0003735">
    <property type="term" value="F:structural constituent of ribosome"/>
    <property type="evidence" value="ECO:0007669"/>
    <property type="project" value="InterPro"/>
</dbReference>
<dbReference type="GO" id="GO:0006412">
    <property type="term" value="P:translation"/>
    <property type="evidence" value="ECO:0007669"/>
    <property type="project" value="UniProtKB-UniRule"/>
</dbReference>
<dbReference type="CDD" id="cd00432">
    <property type="entry name" value="Ribosomal_L18_L5e"/>
    <property type="match status" value="1"/>
</dbReference>
<dbReference type="Gene3D" id="3.30.420.100">
    <property type="match status" value="1"/>
</dbReference>
<dbReference type="HAMAP" id="MF_01337_B">
    <property type="entry name" value="Ribosomal_uL18_B"/>
    <property type="match status" value="1"/>
</dbReference>
<dbReference type="InterPro" id="IPR004389">
    <property type="entry name" value="Ribosomal_uL18_bac-type"/>
</dbReference>
<dbReference type="InterPro" id="IPR005484">
    <property type="entry name" value="Ribosomal_uL18_bac/euk"/>
</dbReference>
<dbReference type="NCBIfam" id="TIGR00060">
    <property type="entry name" value="L18_bact"/>
    <property type="match status" value="1"/>
</dbReference>
<dbReference type="PANTHER" id="PTHR12899">
    <property type="entry name" value="39S RIBOSOMAL PROTEIN L18, MITOCHONDRIAL"/>
    <property type="match status" value="1"/>
</dbReference>
<dbReference type="PANTHER" id="PTHR12899:SF3">
    <property type="entry name" value="LARGE RIBOSOMAL SUBUNIT PROTEIN UL18M"/>
    <property type="match status" value="1"/>
</dbReference>
<dbReference type="Pfam" id="PF00861">
    <property type="entry name" value="Ribosomal_L18p"/>
    <property type="match status" value="1"/>
</dbReference>
<dbReference type="SUPFAM" id="SSF53137">
    <property type="entry name" value="Translational machinery components"/>
    <property type="match status" value="1"/>
</dbReference>
<evidence type="ECO:0000255" key="1">
    <source>
        <dbReference type="HAMAP-Rule" id="MF_01337"/>
    </source>
</evidence>
<evidence type="ECO:0000305" key="2"/>
<keyword id="KW-0687">Ribonucleoprotein</keyword>
<keyword id="KW-0689">Ribosomal protein</keyword>
<keyword id="KW-0694">RNA-binding</keyword>
<keyword id="KW-0699">rRNA-binding</keyword>
<organism>
    <name type="scientific">Sulfurovum sp. (strain NBC37-1)</name>
    <dbReference type="NCBI Taxonomy" id="387093"/>
    <lineage>
        <taxon>Bacteria</taxon>
        <taxon>Pseudomonadati</taxon>
        <taxon>Campylobacterota</taxon>
        <taxon>Epsilonproteobacteria</taxon>
        <taxon>Campylobacterales</taxon>
        <taxon>Sulfurovaceae</taxon>
        <taxon>Sulfurovum</taxon>
    </lineage>
</organism>
<gene>
    <name evidence="1" type="primary">rplR</name>
    <name type="ordered locus">SUN_2337</name>
</gene>
<protein>
    <recommendedName>
        <fullName evidence="1">Large ribosomal subunit protein uL18</fullName>
    </recommendedName>
    <alternativeName>
        <fullName evidence="2">50S ribosomal protein L18</fullName>
    </alternativeName>
</protein>
<name>RL18_SULNB</name>
<feature type="chain" id="PRO_1000053126" description="Large ribosomal subunit protein uL18">
    <location>
        <begin position="1"/>
        <end position="118"/>
    </location>
</feature>